<comment type="miscellaneous">
    <text>Plasmid pJD1 is the smallest of the gonococcal plasmids. Its function is unknown.</text>
</comment>
<reference key="1">
    <citation type="journal article" date="1985" name="J. Bacteriol.">
        <title>Cryptic plasmid of Neisseria gonorrhoeae: complete nucleotide sequence and genetic organization.</title>
        <authorList>
            <person name="Korch C."/>
            <person name="Hagblom P."/>
            <person name="Oehman H."/>
            <person name="Goeransson M."/>
            <person name="Normark S."/>
        </authorList>
    </citation>
    <scope>NUCLEOTIDE SEQUENCE [GENOMIC DNA]</scope>
</reference>
<keyword id="KW-0614">Plasmid</keyword>
<geneLocation type="plasmid">
    <name>pJD1</name>
</geneLocation>
<name>CPPC_NEIGO</name>
<evidence type="ECO:0000256" key="1">
    <source>
        <dbReference type="SAM" id="MobiDB-lite"/>
    </source>
</evidence>
<gene>
    <name type="primary">cppC</name>
</gene>
<organism>
    <name type="scientific">Neisseria gonorrhoeae</name>
    <dbReference type="NCBI Taxonomy" id="485"/>
    <lineage>
        <taxon>Bacteria</taxon>
        <taxon>Pseudomonadati</taxon>
        <taxon>Pseudomonadota</taxon>
        <taxon>Betaproteobacteria</taxon>
        <taxon>Neisseriales</taxon>
        <taxon>Neisseriaceae</taxon>
        <taxon>Neisseria</taxon>
    </lineage>
</organism>
<protein>
    <recommendedName>
        <fullName>Cryptic plasmid protein C</fullName>
    </recommendedName>
</protein>
<accession>P07047</accession>
<proteinExistence type="predicted"/>
<dbReference type="EMBL" id="M10316">
    <property type="protein sequence ID" value="AAA88197.1"/>
    <property type="molecule type" value="Genomic_DNA"/>
</dbReference>
<dbReference type="RefSeq" id="NP_040408.1">
    <property type="nucleotide sequence ID" value="NC_001377.1"/>
</dbReference>
<dbReference type="RefSeq" id="WP_003692170.1">
    <property type="nucleotide sequence ID" value="NZ_PTPP01000065.1"/>
</dbReference>
<dbReference type="InterPro" id="IPR005094">
    <property type="entry name" value="Endonuclease_MobA/VirD2"/>
</dbReference>
<dbReference type="Pfam" id="PF03432">
    <property type="entry name" value="Relaxase"/>
    <property type="match status" value="1"/>
</dbReference>
<sequence length="205" mass="23386">MIVQFFNRGKGGGSGPIDYLLGKDRDREEARLLRGDPEETAALINSSDYAKKYTAGCLSFEESNIPAEQKHALMDSFEECIFAGLDKDQYNCLWVEHRDKGRLELNFVIPNIELLSGKRLQPYYYAADRGRVDAWRTMQNLTHGYSDPDDPAKRQSMTQAKDLPRNTQEAAQSITEHHRRLRSPSPIRQAKKPRRRAGNAGKGRF</sequence>
<feature type="chain" id="PRO_0000079293" description="Cryptic plasmid protein C">
    <location>
        <begin position="1"/>
        <end position="205"/>
    </location>
</feature>
<feature type="region of interest" description="Disordered" evidence="1">
    <location>
        <begin position="142"/>
        <end position="205"/>
    </location>
</feature>
<feature type="compositionally biased region" description="Polar residues" evidence="1">
    <location>
        <begin position="155"/>
        <end position="174"/>
    </location>
</feature>
<feature type="compositionally biased region" description="Basic residues" evidence="1">
    <location>
        <begin position="189"/>
        <end position="205"/>
    </location>
</feature>